<comment type="function">
    <text evidence="2">Conversion of 1,4-dihydroxy-2-naphthoate (DHNA) to demethylmenaquinone (DMK). Can use a variety of allylic isoprenyl diphosphates as substrates but has a requirement for at least three isoprene units.</text>
</comment>
<comment type="catalytic activity">
    <reaction evidence="1 2">
        <text>an all-trans-polyprenyl diphosphate + 1,4-dihydroxy-2-naphthoate + H(+) = a 2-demethylmenaquinol + CO2 + diphosphate</text>
        <dbReference type="Rhea" id="RHEA:26478"/>
        <dbReference type="Rhea" id="RHEA-COMP:9563"/>
        <dbReference type="Rhea" id="RHEA-COMP:9564"/>
        <dbReference type="ChEBI" id="CHEBI:11173"/>
        <dbReference type="ChEBI" id="CHEBI:15378"/>
        <dbReference type="ChEBI" id="CHEBI:16526"/>
        <dbReference type="ChEBI" id="CHEBI:33019"/>
        <dbReference type="ChEBI" id="CHEBI:55437"/>
        <dbReference type="ChEBI" id="CHEBI:58914"/>
        <dbReference type="EC" id="2.5.1.74"/>
    </reaction>
</comment>
<comment type="cofactor">
    <cofactor evidence="2">
        <name>Mg(2+)</name>
        <dbReference type="ChEBI" id="CHEBI:18420"/>
    </cofactor>
    <text evidence="2">Can also use Fe(2+) or Zn(2+), with lower efficiency.</text>
</comment>
<comment type="activity regulation">
    <text evidence="2">Activity is abolished by EDTA. Inhibited by Ro 48-8071, which is non-competitive with regard to DHNA and competitive with regard to the isoprenyldiphosphate substrate.</text>
</comment>
<comment type="biophysicochemical properties">
    <kinetics>
        <KM evidence="2">8.2 uM for DHNA</KM>
        <KM evidence="2">4.3 uM for farnesyl diphosphate</KM>
    </kinetics>
    <phDependence>
        <text evidence="2">Optimum pH is 8.5.</text>
    </phDependence>
</comment>
<comment type="pathway">
    <text evidence="1 4">Quinol/quinone metabolism; menaquinone biosynthesis; menaquinol from 1,4-dihydroxy-2-naphthoate: step 1/2.</text>
</comment>
<comment type="subcellular location">
    <subcellularLocation>
        <location evidence="1 2">Cell membrane</location>
        <topology evidence="1">Multi-pass membrane protein</topology>
    </subcellularLocation>
</comment>
<comment type="disruption phenotype">
    <text evidence="2">Essential, it cannot be deleted.</text>
</comment>
<comment type="similarity">
    <text evidence="1">Belongs to the MenA family. Type 1 subfamily.</text>
</comment>
<sequence length="292" mass="30014">MASFAQWVSGARPRTLPNAIAPVVAGTGAAAWLHAAVWWKALLALAVAVALVIGVNYANDYSDGIRGTDDDRVGPVRLVGSRLATPRSVLTAAMTSLALGALAGLVLALLSAPWLIAVGAICIAGAWLYTGGSKPYGYAGFGELAVFVFFGPVAVLGTQYTQALRVDWVGLAQAVATGALSCSVLVANNLRDIPTDARADKITLAVRLGDARTRMLYQGLLAVAGVLTFVLMLATPWCVVGLVAAPLALRAAGPVRSGRGGRELIPVLRDTGLAMLVWALAVAGALAFGQLS</sequence>
<evidence type="ECO:0000255" key="1">
    <source>
        <dbReference type="HAMAP-Rule" id="MF_01937"/>
    </source>
</evidence>
<evidence type="ECO:0000269" key="2">
    <source>
    </source>
</evidence>
<evidence type="ECO:0000303" key="3">
    <source>
    </source>
</evidence>
<evidence type="ECO:0000305" key="4">
    <source>
    </source>
</evidence>
<reference key="1">
    <citation type="journal article" date="1998" name="Nature">
        <title>Deciphering the biology of Mycobacterium tuberculosis from the complete genome sequence.</title>
        <authorList>
            <person name="Cole S.T."/>
            <person name="Brosch R."/>
            <person name="Parkhill J."/>
            <person name="Garnier T."/>
            <person name="Churcher C.M."/>
            <person name="Harris D.E."/>
            <person name="Gordon S.V."/>
            <person name="Eiglmeier K."/>
            <person name="Gas S."/>
            <person name="Barry C.E. III"/>
            <person name="Tekaia F."/>
            <person name="Badcock K."/>
            <person name="Basham D."/>
            <person name="Brown D."/>
            <person name="Chillingworth T."/>
            <person name="Connor R."/>
            <person name="Davies R.M."/>
            <person name="Devlin K."/>
            <person name="Feltwell T."/>
            <person name="Gentles S."/>
            <person name="Hamlin N."/>
            <person name="Holroyd S."/>
            <person name="Hornsby T."/>
            <person name="Jagels K."/>
            <person name="Krogh A."/>
            <person name="McLean J."/>
            <person name="Moule S."/>
            <person name="Murphy L.D."/>
            <person name="Oliver S."/>
            <person name="Osborne J."/>
            <person name="Quail M.A."/>
            <person name="Rajandream M.A."/>
            <person name="Rogers J."/>
            <person name="Rutter S."/>
            <person name="Seeger K."/>
            <person name="Skelton S."/>
            <person name="Squares S."/>
            <person name="Squares R."/>
            <person name="Sulston J.E."/>
            <person name="Taylor K."/>
            <person name="Whitehead S."/>
            <person name="Barrell B.G."/>
        </authorList>
    </citation>
    <scope>NUCLEOTIDE SEQUENCE [LARGE SCALE GENOMIC DNA]</scope>
    <source>
        <strain>ATCC 25618 / H37Rv</strain>
    </source>
</reference>
<reference key="2">
    <citation type="journal article" date="2011" name="Mol. Cell. Proteomics">
        <title>Proteogenomic analysis of Mycobacterium tuberculosis by high resolution mass spectrometry.</title>
        <authorList>
            <person name="Kelkar D.S."/>
            <person name="Kumar D."/>
            <person name="Kumar P."/>
            <person name="Balakrishnan L."/>
            <person name="Muthusamy B."/>
            <person name="Yadav A.K."/>
            <person name="Shrivastava P."/>
            <person name="Marimuthu A."/>
            <person name="Anand S."/>
            <person name="Sundaram H."/>
            <person name="Kingsbury R."/>
            <person name="Harsha H.C."/>
            <person name="Nair B."/>
            <person name="Prasad T.S."/>
            <person name="Chauhan D.S."/>
            <person name="Katoch K."/>
            <person name="Katoch V.M."/>
            <person name="Kumar P."/>
            <person name="Chaerkady R."/>
            <person name="Ramachandran S."/>
            <person name="Dash D."/>
            <person name="Pandey A."/>
        </authorList>
    </citation>
    <scope>IDENTIFICATION BY MASS SPECTROMETRY [LARGE SCALE ANALYSIS]</scope>
    <source>
        <strain>ATCC 25618 / H37Rv</strain>
    </source>
</reference>
<reference key="3">
    <citation type="journal article" date="2019" name="PLoS ONE">
        <title>Characterization of MenA (isoprenyl diphosphate:1,4-dihydroxy-2-naphthoate isoprenyltransferase) from Mycobacterium tuberculosis.</title>
        <authorList>
            <person name="Dhiman R.K."/>
            <person name="Pujari V."/>
            <person name="Kincaid J.M."/>
            <person name="Ikeh M.A."/>
            <person name="Parish T."/>
            <person name="Crick D.C."/>
        </authorList>
    </citation>
    <scope>FUNCTION</scope>
    <scope>CATALYTIC ACTIVITY</scope>
    <scope>COFACTOR</scope>
    <scope>ACTIVITY REGULATION</scope>
    <scope>BIOPHYSICOCHEMICAL PROPERTIES</scope>
    <scope>PATHWAY</scope>
    <scope>SUBCELLULAR LOCATION</scope>
    <scope>DISRUPTION PHENOTYPE</scope>
    <source>
        <strain>H37Rv</strain>
    </source>
</reference>
<keyword id="KW-1003">Cell membrane</keyword>
<keyword id="KW-0460">Magnesium</keyword>
<keyword id="KW-0472">Membrane</keyword>
<keyword id="KW-0474">Menaquinone biosynthesis</keyword>
<keyword id="KW-1185">Reference proteome</keyword>
<keyword id="KW-0808">Transferase</keyword>
<keyword id="KW-0812">Transmembrane</keyword>
<keyword id="KW-1133">Transmembrane helix</keyword>
<feature type="chain" id="PRO_0000096418" description="1,4-dihydroxy-2-naphthoate octaprenyltransferase">
    <location>
        <begin position="1"/>
        <end position="292"/>
    </location>
</feature>
<feature type="transmembrane region" description="Helical" evidence="1">
    <location>
        <begin position="35"/>
        <end position="55"/>
    </location>
</feature>
<feature type="transmembrane region" description="Helical" evidence="1">
    <location>
        <begin position="101"/>
        <end position="121"/>
    </location>
</feature>
<feature type="transmembrane region" description="Helical" evidence="1">
    <location>
        <begin position="137"/>
        <end position="157"/>
    </location>
</feature>
<feature type="transmembrane region" description="Helical" evidence="1">
    <location>
        <begin position="166"/>
        <end position="186"/>
    </location>
</feature>
<feature type="transmembrane region" description="Helical" evidence="1">
    <location>
        <begin position="220"/>
        <end position="240"/>
    </location>
</feature>
<feature type="transmembrane region" description="Helical" evidence="1">
    <location>
        <begin position="271"/>
        <end position="291"/>
    </location>
</feature>
<accession>P9WIP3</accession>
<accession>L0T6Z2</accession>
<accession>O06400</accession>
<accession>P65650</accession>
<organism>
    <name type="scientific">Mycobacterium tuberculosis (strain ATCC 25618 / H37Rv)</name>
    <dbReference type="NCBI Taxonomy" id="83332"/>
    <lineage>
        <taxon>Bacteria</taxon>
        <taxon>Bacillati</taxon>
        <taxon>Actinomycetota</taxon>
        <taxon>Actinomycetes</taxon>
        <taxon>Mycobacteriales</taxon>
        <taxon>Mycobacteriaceae</taxon>
        <taxon>Mycobacterium</taxon>
        <taxon>Mycobacterium tuberculosis complex</taxon>
    </lineage>
</organism>
<gene>
    <name evidence="1 3" type="primary">menA</name>
    <name type="ordered locus">Rv0534c</name>
    <name type="ORF">MTCY25D10.13c</name>
</gene>
<name>MENA_MYCTU</name>
<protein>
    <recommendedName>
        <fullName evidence="1">1,4-dihydroxy-2-naphthoate octaprenyltransferase</fullName>
        <shortName evidence="1">DHNA-octaprenyltransferase</shortName>
        <ecNumber evidence="1 2">2.5.1.74</ecNumber>
    </recommendedName>
    <alternativeName>
        <fullName evidence="3">Isoprenyl diphosphate:1,4-dihydroxy-2-naphthoate isoprenyltransferase</fullName>
    </alternativeName>
</protein>
<dbReference type="EC" id="2.5.1.74" evidence="1 2"/>
<dbReference type="EMBL" id="AL123456">
    <property type="protein sequence ID" value="CCP43272.1"/>
    <property type="molecule type" value="Genomic_DNA"/>
</dbReference>
<dbReference type="PIR" id="A70546">
    <property type="entry name" value="A70546"/>
</dbReference>
<dbReference type="RefSeq" id="NP_215048.1">
    <property type="nucleotide sequence ID" value="NC_000962.3"/>
</dbReference>
<dbReference type="RefSeq" id="WP_003402865.1">
    <property type="nucleotide sequence ID" value="NZ_NVQJ01000036.1"/>
</dbReference>
<dbReference type="SMR" id="P9WIP3"/>
<dbReference type="FunCoup" id="P9WIP3">
    <property type="interactions" value="314"/>
</dbReference>
<dbReference type="STRING" id="83332.Rv0534c"/>
<dbReference type="BindingDB" id="P9WIP3"/>
<dbReference type="ChEMBL" id="CHEMBL4879548"/>
<dbReference type="PaxDb" id="83332-Rv0534c"/>
<dbReference type="DNASU" id="887408"/>
<dbReference type="GeneID" id="887408"/>
<dbReference type="KEGG" id="mtu:Rv0534c"/>
<dbReference type="KEGG" id="mtv:RVBD_0534c"/>
<dbReference type="TubercuList" id="Rv0534c"/>
<dbReference type="eggNOG" id="COG1575">
    <property type="taxonomic scope" value="Bacteria"/>
</dbReference>
<dbReference type="InParanoid" id="P9WIP3"/>
<dbReference type="OrthoDB" id="9767568at2"/>
<dbReference type="PhylomeDB" id="P9WIP3"/>
<dbReference type="UniPathway" id="UPA00079">
    <property type="reaction ID" value="UER00168"/>
</dbReference>
<dbReference type="Proteomes" id="UP000001584">
    <property type="component" value="Chromosome"/>
</dbReference>
<dbReference type="GO" id="GO:0005886">
    <property type="term" value="C:plasma membrane"/>
    <property type="evidence" value="ECO:0007669"/>
    <property type="project" value="UniProtKB-SubCell"/>
</dbReference>
<dbReference type="GO" id="GO:0046428">
    <property type="term" value="F:1,4-dihydroxy-2-naphthoate polyprenyltransferase activity"/>
    <property type="evidence" value="ECO:0007669"/>
    <property type="project" value="UniProtKB-UniRule"/>
</dbReference>
<dbReference type="GO" id="GO:0004659">
    <property type="term" value="F:prenyltransferase activity"/>
    <property type="evidence" value="ECO:0000318"/>
    <property type="project" value="GO_Central"/>
</dbReference>
<dbReference type="GO" id="GO:0009234">
    <property type="term" value="P:menaquinone biosynthetic process"/>
    <property type="evidence" value="ECO:0000318"/>
    <property type="project" value="GO_Central"/>
</dbReference>
<dbReference type="GO" id="GO:0042371">
    <property type="term" value="P:vitamin K biosynthetic process"/>
    <property type="evidence" value="ECO:0000318"/>
    <property type="project" value="GO_Central"/>
</dbReference>
<dbReference type="CDD" id="cd13962">
    <property type="entry name" value="PT_UbiA_UBIAD1"/>
    <property type="match status" value="1"/>
</dbReference>
<dbReference type="HAMAP" id="MF_01937">
    <property type="entry name" value="MenA_1"/>
    <property type="match status" value="1"/>
</dbReference>
<dbReference type="InterPro" id="IPR004657">
    <property type="entry name" value="MenA"/>
</dbReference>
<dbReference type="InterPro" id="IPR000537">
    <property type="entry name" value="UbiA_prenyltransferase"/>
</dbReference>
<dbReference type="InterPro" id="IPR026046">
    <property type="entry name" value="UBIAD1"/>
</dbReference>
<dbReference type="NCBIfam" id="TIGR00751">
    <property type="entry name" value="menA"/>
    <property type="match status" value="1"/>
</dbReference>
<dbReference type="NCBIfam" id="NF004751">
    <property type="entry name" value="PRK06080.1-3"/>
    <property type="match status" value="1"/>
</dbReference>
<dbReference type="PANTHER" id="PTHR13929">
    <property type="entry name" value="1,4-DIHYDROXY-2-NAPHTHOATE OCTAPRENYLTRANSFERASE"/>
    <property type="match status" value="1"/>
</dbReference>
<dbReference type="PANTHER" id="PTHR13929:SF0">
    <property type="entry name" value="UBIA PRENYLTRANSFERASE DOMAIN-CONTAINING PROTEIN 1"/>
    <property type="match status" value="1"/>
</dbReference>
<dbReference type="Pfam" id="PF01040">
    <property type="entry name" value="UbiA"/>
    <property type="match status" value="1"/>
</dbReference>
<dbReference type="PIRSF" id="PIRSF005355">
    <property type="entry name" value="UBIAD1"/>
    <property type="match status" value="1"/>
</dbReference>
<proteinExistence type="evidence at protein level"/>